<sequence length="386" mass="43145">MGILGLSKLIADLAPQAIRESEMKHFFGRKVAIDASMCLYQFLIAVRSEGAQLATVNGDPTSHLMGMFYRTIRLLDNGIKPVYVFDGKPPDLKSGELAKRAERREEAEKALKAATDAGDDAEIEKFNRRLVRVTKEHAREAKELLSLMGVPYVDAPCEAEAQCAALVKAGKVYATATEDMDALTFGSTKLLRYLTYSEARKMPVKEFSYDKLLEGLEVNNREFIDLCILLGCDYCESIKGIGPKRAIELINNYRDIETILDNLDTSKYTVPENWNYKVARELFIEPEVADASAIDLKWTEPDEEGLVKFLCGDRQFSEERVRNGAKKLFKSKHAQTQVRLDSFFKTLPSTPNAVNAAKRKAEEAKKSANNKKAKTSGGAARGRRPK</sequence>
<gene>
    <name evidence="1" type="primary">Fen1</name>
    <name type="ORF">GA27689</name>
</gene>
<organism>
    <name type="scientific">Drosophila pseudoobscura pseudoobscura</name>
    <name type="common">Fruit fly</name>
    <dbReference type="NCBI Taxonomy" id="46245"/>
    <lineage>
        <taxon>Eukaryota</taxon>
        <taxon>Metazoa</taxon>
        <taxon>Ecdysozoa</taxon>
        <taxon>Arthropoda</taxon>
        <taxon>Hexapoda</taxon>
        <taxon>Insecta</taxon>
        <taxon>Pterygota</taxon>
        <taxon>Neoptera</taxon>
        <taxon>Endopterygota</taxon>
        <taxon>Diptera</taxon>
        <taxon>Brachycera</taxon>
        <taxon>Muscomorpha</taxon>
        <taxon>Ephydroidea</taxon>
        <taxon>Drosophilidae</taxon>
        <taxon>Drosophila</taxon>
        <taxon>Sophophora</taxon>
    </lineage>
</organism>
<proteinExistence type="inferred from homology"/>
<comment type="function">
    <text evidence="1">Structure-specific nuclease with 5'-flap endonuclease and 5'-3' exonuclease activities involved in DNA replication and repair. During DNA replication, cleaves the 5'-overhanging flap structure that is generated by displacement synthesis when DNA polymerase encounters the 5'-end of a downstream Okazaki fragment. It enters the flap from the 5'-end and then tracks to cleave the flap base, leaving a nick for ligation. Also involved in the long patch base excision repair (LP-BER) pathway, by cleaving within the apurinic/apyrimidinic (AP) site-terminated flap. Acts as a genome stabilization factor that prevents flaps from equilibrating into structures that lead to duplications and deletions. Also possesses 5'-3' exonuclease activity on nicked or gapped double-stranded DNA, and exhibits RNase H activity. Also involved in replication and repair of rDNA and in repairing mitochondrial DNA.</text>
</comment>
<comment type="cofactor">
    <cofactor evidence="1">
        <name>Mg(2+)</name>
        <dbReference type="ChEBI" id="CHEBI:18420"/>
    </cofactor>
    <text evidence="1">Binds 2 magnesium ions per subunit. They probably participate in the reaction catalyzed by the enzyme. May bind an additional third magnesium ion after substrate binding.</text>
</comment>
<comment type="subunit">
    <text evidence="1">Interacts with PCNA. Three molecules of FEN1 bind to one PCNA trimer with each molecule binding to one PCNA monomer. PCNA stimulates the nuclease activity without altering cleavage specificity.</text>
</comment>
<comment type="subcellular location">
    <subcellularLocation>
        <location evidence="1">Nucleus</location>
        <location evidence="1">Nucleolus</location>
    </subcellularLocation>
    <subcellularLocation>
        <location evidence="1">Nucleus</location>
        <location evidence="1">Nucleoplasm</location>
    </subcellularLocation>
    <subcellularLocation>
        <location evidence="1">Mitochondrion</location>
    </subcellularLocation>
    <text evidence="1">Resides mostly in the nucleoli and relocalizes to the nucleoplasm upon DNA damage.</text>
</comment>
<comment type="PTM">
    <text evidence="1">Phosphorylated. Phosphorylation upon DNA damage induces relocalization to the nuclear plasma.</text>
</comment>
<comment type="similarity">
    <text evidence="1">Belongs to the XPG/RAD2 endonuclease family. FEN1 subfamily.</text>
</comment>
<feature type="chain" id="PRO_0000403503" description="Flap endonuclease 1">
    <location>
        <begin position="1"/>
        <end position="386"/>
    </location>
</feature>
<feature type="region of interest" description="N-domain">
    <location>
        <begin position="1"/>
        <end position="104"/>
    </location>
</feature>
<feature type="region of interest" description="I-domain">
    <location>
        <begin position="122"/>
        <end position="253"/>
    </location>
</feature>
<feature type="region of interest" description="Interaction with PCNA" evidence="1">
    <location>
        <begin position="336"/>
        <end position="344"/>
    </location>
</feature>
<feature type="region of interest" description="Disordered" evidence="2">
    <location>
        <begin position="354"/>
        <end position="386"/>
    </location>
</feature>
<feature type="binding site" evidence="1">
    <location>
        <position position="34"/>
    </location>
    <ligand>
        <name>Mg(2+)</name>
        <dbReference type="ChEBI" id="CHEBI:18420"/>
        <label>1</label>
    </ligand>
</feature>
<feature type="binding site" evidence="1">
    <location>
        <position position="47"/>
    </location>
    <ligand>
        <name>DNA</name>
        <dbReference type="ChEBI" id="CHEBI:16991"/>
    </ligand>
</feature>
<feature type="binding site" evidence="1">
    <location>
        <position position="70"/>
    </location>
    <ligand>
        <name>DNA</name>
        <dbReference type="ChEBI" id="CHEBI:16991"/>
    </ligand>
</feature>
<feature type="binding site" evidence="1">
    <location>
        <position position="86"/>
    </location>
    <ligand>
        <name>Mg(2+)</name>
        <dbReference type="ChEBI" id="CHEBI:18420"/>
        <label>1</label>
    </ligand>
</feature>
<feature type="binding site" evidence="1">
    <location>
        <position position="158"/>
    </location>
    <ligand>
        <name>DNA</name>
        <dbReference type="ChEBI" id="CHEBI:16991"/>
    </ligand>
</feature>
<feature type="binding site" evidence="1">
    <location>
        <position position="158"/>
    </location>
    <ligand>
        <name>Mg(2+)</name>
        <dbReference type="ChEBI" id="CHEBI:18420"/>
        <label>1</label>
    </ligand>
</feature>
<feature type="binding site" evidence="1">
    <location>
        <position position="160"/>
    </location>
    <ligand>
        <name>Mg(2+)</name>
        <dbReference type="ChEBI" id="CHEBI:18420"/>
        <label>1</label>
    </ligand>
</feature>
<feature type="binding site" evidence="1">
    <location>
        <position position="179"/>
    </location>
    <ligand>
        <name>Mg(2+)</name>
        <dbReference type="ChEBI" id="CHEBI:18420"/>
        <label>2</label>
    </ligand>
</feature>
<feature type="binding site" evidence="1">
    <location>
        <position position="181"/>
    </location>
    <ligand>
        <name>Mg(2+)</name>
        <dbReference type="ChEBI" id="CHEBI:18420"/>
        <label>2</label>
    </ligand>
</feature>
<feature type="binding site" evidence="1">
    <location>
        <position position="231"/>
    </location>
    <ligand>
        <name>DNA</name>
        <dbReference type="ChEBI" id="CHEBI:16991"/>
    </ligand>
</feature>
<feature type="binding site" evidence="1">
    <location>
        <position position="233"/>
    </location>
    <ligand>
        <name>DNA</name>
        <dbReference type="ChEBI" id="CHEBI:16991"/>
    </ligand>
</feature>
<feature type="binding site" evidence="1">
    <location>
        <position position="233"/>
    </location>
    <ligand>
        <name>Mg(2+)</name>
        <dbReference type="ChEBI" id="CHEBI:18420"/>
        <label>2</label>
    </ligand>
</feature>
<reference key="1">
    <citation type="journal article" date="2005" name="Genome Res.">
        <title>Comparative genome sequencing of Drosophila pseudoobscura: chromosomal, gene, and cis-element evolution.</title>
        <authorList>
            <person name="Richards S."/>
            <person name="Liu Y."/>
            <person name="Bettencourt B.R."/>
            <person name="Hradecky P."/>
            <person name="Letovsky S."/>
            <person name="Nielsen R."/>
            <person name="Thornton K."/>
            <person name="Hubisz M.J."/>
            <person name="Chen R."/>
            <person name="Meisel R.P."/>
            <person name="Couronne O."/>
            <person name="Hua S."/>
            <person name="Smith M.A."/>
            <person name="Zhang P."/>
            <person name="Liu J."/>
            <person name="Bussemaker H.J."/>
            <person name="van Batenburg M.F."/>
            <person name="Howells S.L."/>
            <person name="Scherer S.E."/>
            <person name="Sodergren E."/>
            <person name="Matthews B.B."/>
            <person name="Crosby M.A."/>
            <person name="Schroeder A.J."/>
            <person name="Ortiz-Barrientos D."/>
            <person name="Rives C.M."/>
            <person name="Metzker M.L."/>
            <person name="Muzny D.M."/>
            <person name="Scott G."/>
            <person name="Steffen D."/>
            <person name="Wheeler D.A."/>
            <person name="Worley K.C."/>
            <person name="Havlak P."/>
            <person name="Durbin K.J."/>
            <person name="Egan A."/>
            <person name="Gill R."/>
            <person name="Hume J."/>
            <person name="Morgan M.B."/>
            <person name="Miner G."/>
            <person name="Hamilton C."/>
            <person name="Huang Y."/>
            <person name="Waldron L."/>
            <person name="Verduzco D."/>
            <person name="Clerc-Blankenburg K.P."/>
            <person name="Dubchak I."/>
            <person name="Noor M.A.F."/>
            <person name="Anderson W."/>
            <person name="White K.P."/>
            <person name="Clark A.G."/>
            <person name="Schaeffer S.W."/>
            <person name="Gelbart W.M."/>
            <person name="Weinstock G.M."/>
            <person name="Gibbs R.A."/>
        </authorList>
    </citation>
    <scope>NUCLEOTIDE SEQUENCE [LARGE SCALE GENOMIC DNA]</scope>
    <source>
        <strain>MV2-25 / Tucson 14011-0121.94</strain>
    </source>
</reference>
<protein>
    <recommendedName>
        <fullName evidence="1">Flap endonuclease 1</fullName>
        <shortName evidence="1">FEN-1</shortName>
        <ecNumber evidence="1">3.1.-.-</ecNumber>
    </recommendedName>
    <alternativeName>
        <fullName evidence="1">Flap structure-specific endonuclease 1</fullName>
    </alternativeName>
</protein>
<accession>B5DUR8</accession>
<name>FEN1_DROPS</name>
<dbReference type="EC" id="3.1.-.-" evidence="1"/>
<dbReference type="EMBL" id="CH674335">
    <property type="protein sequence ID" value="EDY71637.1"/>
    <property type="molecule type" value="Genomic_DNA"/>
</dbReference>
<dbReference type="RefSeq" id="XP_002136633.1">
    <property type="nucleotide sequence ID" value="XM_002136597.2"/>
</dbReference>
<dbReference type="SMR" id="B5DUR8"/>
<dbReference type="FunCoup" id="B5DUR8">
    <property type="interactions" value="2245"/>
</dbReference>
<dbReference type="STRING" id="46245.B5DUR8"/>
<dbReference type="EnsemblMetazoa" id="FBtr0286673">
    <property type="protein sequence ID" value="FBpp0285111"/>
    <property type="gene ID" value="FBgn0249054"/>
</dbReference>
<dbReference type="GeneID" id="6903886"/>
<dbReference type="KEGG" id="dpo:6903886"/>
<dbReference type="CTD" id="2237"/>
<dbReference type="eggNOG" id="KOG2519">
    <property type="taxonomic scope" value="Eukaryota"/>
</dbReference>
<dbReference type="HOGENOM" id="CLU_032444_2_0_1"/>
<dbReference type="InParanoid" id="B5DUR8"/>
<dbReference type="OMA" id="MGIPWVQ"/>
<dbReference type="Proteomes" id="UP000001819">
    <property type="component" value="Chromosome 3"/>
</dbReference>
<dbReference type="Bgee" id="FBgn0249054">
    <property type="expression patterns" value="Expressed in female reproductive system and 3 other cell types or tissues"/>
</dbReference>
<dbReference type="GO" id="GO:0005739">
    <property type="term" value="C:mitochondrion"/>
    <property type="evidence" value="ECO:0007669"/>
    <property type="project" value="UniProtKB-SubCell"/>
</dbReference>
<dbReference type="GO" id="GO:0005730">
    <property type="term" value="C:nucleolus"/>
    <property type="evidence" value="ECO:0007669"/>
    <property type="project" value="UniProtKB-SubCell"/>
</dbReference>
<dbReference type="GO" id="GO:0005654">
    <property type="term" value="C:nucleoplasm"/>
    <property type="evidence" value="ECO:0007669"/>
    <property type="project" value="UniProtKB-SubCell"/>
</dbReference>
<dbReference type="GO" id="GO:0008409">
    <property type="term" value="F:5'-3' exonuclease activity"/>
    <property type="evidence" value="ECO:0007669"/>
    <property type="project" value="UniProtKB-UniRule"/>
</dbReference>
<dbReference type="GO" id="GO:0017108">
    <property type="term" value="F:5'-flap endonuclease activity"/>
    <property type="evidence" value="ECO:0007669"/>
    <property type="project" value="UniProtKB-UniRule"/>
</dbReference>
<dbReference type="GO" id="GO:0003677">
    <property type="term" value="F:DNA binding"/>
    <property type="evidence" value="ECO:0007669"/>
    <property type="project" value="UniProtKB-UniRule"/>
</dbReference>
<dbReference type="GO" id="GO:0000287">
    <property type="term" value="F:magnesium ion binding"/>
    <property type="evidence" value="ECO:0007669"/>
    <property type="project" value="UniProtKB-UniRule"/>
</dbReference>
<dbReference type="GO" id="GO:0030145">
    <property type="term" value="F:manganese ion binding"/>
    <property type="evidence" value="ECO:0007669"/>
    <property type="project" value="TreeGrafter"/>
</dbReference>
<dbReference type="GO" id="GO:0004523">
    <property type="term" value="F:RNA-DNA hybrid ribonuclease activity"/>
    <property type="evidence" value="ECO:0007669"/>
    <property type="project" value="TreeGrafter"/>
</dbReference>
<dbReference type="GO" id="GO:0006284">
    <property type="term" value="P:base-excision repair"/>
    <property type="evidence" value="ECO:0007669"/>
    <property type="project" value="UniProtKB-UniRule"/>
</dbReference>
<dbReference type="GO" id="GO:0043137">
    <property type="term" value="P:DNA replication, removal of RNA primer"/>
    <property type="evidence" value="ECO:0007669"/>
    <property type="project" value="UniProtKB-UniRule"/>
</dbReference>
<dbReference type="CDD" id="cd09867">
    <property type="entry name" value="PIN_FEN1"/>
    <property type="match status" value="1"/>
</dbReference>
<dbReference type="FunFam" id="1.10.150.20:FF:000009">
    <property type="entry name" value="Flap endonuclease 1"/>
    <property type="match status" value="1"/>
</dbReference>
<dbReference type="FunFam" id="3.40.50.1010:FF:000003">
    <property type="entry name" value="Flap endonuclease 1"/>
    <property type="match status" value="1"/>
</dbReference>
<dbReference type="Gene3D" id="1.10.150.20">
    <property type="entry name" value="5' to 3' exonuclease, C-terminal subdomain"/>
    <property type="match status" value="1"/>
</dbReference>
<dbReference type="Gene3D" id="3.40.50.1010">
    <property type="entry name" value="5'-nuclease"/>
    <property type="match status" value="1"/>
</dbReference>
<dbReference type="HAMAP" id="MF_00614">
    <property type="entry name" value="Fen"/>
    <property type="match status" value="1"/>
</dbReference>
<dbReference type="InterPro" id="IPR036279">
    <property type="entry name" value="5-3_exonuclease_C_sf"/>
</dbReference>
<dbReference type="InterPro" id="IPR023426">
    <property type="entry name" value="Flap_endonuc"/>
</dbReference>
<dbReference type="InterPro" id="IPR008918">
    <property type="entry name" value="HhH2"/>
</dbReference>
<dbReference type="InterPro" id="IPR029060">
    <property type="entry name" value="PIN-like_dom_sf"/>
</dbReference>
<dbReference type="InterPro" id="IPR006086">
    <property type="entry name" value="XPG-I_dom"/>
</dbReference>
<dbReference type="InterPro" id="IPR006084">
    <property type="entry name" value="XPG/Rad2"/>
</dbReference>
<dbReference type="InterPro" id="IPR019974">
    <property type="entry name" value="XPG_CS"/>
</dbReference>
<dbReference type="InterPro" id="IPR006085">
    <property type="entry name" value="XPG_DNA_repair_N"/>
</dbReference>
<dbReference type="PANTHER" id="PTHR11081:SF9">
    <property type="entry name" value="FLAP ENDONUCLEASE 1"/>
    <property type="match status" value="1"/>
</dbReference>
<dbReference type="PANTHER" id="PTHR11081">
    <property type="entry name" value="FLAP ENDONUCLEASE FAMILY MEMBER"/>
    <property type="match status" value="1"/>
</dbReference>
<dbReference type="Pfam" id="PF00867">
    <property type="entry name" value="XPG_I"/>
    <property type="match status" value="1"/>
</dbReference>
<dbReference type="Pfam" id="PF00752">
    <property type="entry name" value="XPG_N"/>
    <property type="match status" value="1"/>
</dbReference>
<dbReference type="PRINTS" id="PR00853">
    <property type="entry name" value="XPGRADSUPER"/>
</dbReference>
<dbReference type="SMART" id="SM00279">
    <property type="entry name" value="HhH2"/>
    <property type="match status" value="1"/>
</dbReference>
<dbReference type="SMART" id="SM00484">
    <property type="entry name" value="XPGI"/>
    <property type="match status" value="1"/>
</dbReference>
<dbReference type="SMART" id="SM00485">
    <property type="entry name" value="XPGN"/>
    <property type="match status" value="1"/>
</dbReference>
<dbReference type="SUPFAM" id="SSF47807">
    <property type="entry name" value="5' to 3' exonuclease, C-terminal subdomain"/>
    <property type="match status" value="1"/>
</dbReference>
<dbReference type="SUPFAM" id="SSF88723">
    <property type="entry name" value="PIN domain-like"/>
    <property type="match status" value="1"/>
</dbReference>
<dbReference type="PROSITE" id="PS00841">
    <property type="entry name" value="XPG_1"/>
    <property type="match status" value="1"/>
</dbReference>
<dbReference type="PROSITE" id="PS00842">
    <property type="entry name" value="XPG_2"/>
    <property type="match status" value="1"/>
</dbReference>
<evidence type="ECO:0000255" key="1">
    <source>
        <dbReference type="HAMAP-Rule" id="MF_03140"/>
    </source>
</evidence>
<evidence type="ECO:0000256" key="2">
    <source>
        <dbReference type="SAM" id="MobiDB-lite"/>
    </source>
</evidence>
<keyword id="KW-0227">DNA damage</keyword>
<keyword id="KW-0234">DNA repair</keyword>
<keyword id="KW-0235">DNA replication</keyword>
<keyword id="KW-0255">Endonuclease</keyword>
<keyword id="KW-0269">Exonuclease</keyword>
<keyword id="KW-0378">Hydrolase</keyword>
<keyword id="KW-0460">Magnesium</keyword>
<keyword id="KW-0479">Metal-binding</keyword>
<keyword id="KW-0496">Mitochondrion</keyword>
<keyword id="KW-0540">Nuclease</keyword>
<keyword id="KW-0539">Nucleus</keyword>
<keyword id="KW-0597">Phosphoprotein</keyword>
<keyword id="KW-1185">Reference proteome</keyword>